<dbReference type="EMBL" id="L22557">
    <property type="protein sequence ID" value="AAA16633.1"/>
    <property type="molecule type" value="mRNA"/>
</dbReference>
<dbReference type="PIR" id="I56542">
    <property type="entry name" value="I56542"/>
</dbReference>
<dbReference type="RefSeq" id="NP_076490.1">
    <property type="nucleotide sequence ID" value="NM_024000.1"/>
</dbReference>
<dbReference type="SMR" id="Q63092"/>
<dbReference type="BioGRID" id="249391">
    <property type="interactions" value="5"/>
</dbReference>
<dbReference type="FunCoup" id="Q63092">
    <property type="interactions" value="811"/>
</dbReference>
<dbReference type="IntAct" id="Q63092">
    <property type="interactions" value="1"/>
</dbReference>
<dbReference type="MINT" id="Q63092"/>
<dbReference type="STRING" id="10116.ENSRNOP00000071953"/>
<dbReference type="GlyGen" id="Q63092">
    <property type="glycosylation" value="2 sites, 1 O-linked glycan (1 site)"/>
</dbReference>
<dbReference type="iPTMnet" id="Q63092"/>
<dbReference type="PhosphoSitePlus" id="Q63092"/>
<dbReference type="SwissPalm" id="Q63092"/>
<dbReference type="PaxDb" id="10116-ENSRNOP00000025311"/>
<dbReference type="GeneID" id="79011"/>
<dbReference type="KEGG" id="rno:79011"/>
<dbReference type="AGR" id="RGD:621488"/>
<dbReference type="CTD" id="79012"/>
<dbReference type="RGD" id="621488">
    <property type="gene designation" value="Camkv"/>
</dbReference>
<dbReference type="eggNOG" id="KOG0032">
    <property type="taxonomic scope" value="Eukaryota"/>
</dbReference>
<dbReference type="InParanoid" id="Q63092"/>
<dbReference type="OrthoDB" id="62465at9989"/>
<dbReference type="PhylomeDB" id="Q63092"/>
<dbReference type="PRO" id="PR:Q63092"/>
<dbReference type="Proteomes" id="UP000002494">
    <property type="component" value="Unplaced"/>
</dbReference>
<dbReference type="GO" id="GO:0005737">
    <property type="term" value="C:cytoplasm"/>
    <property type="evidence" value="ECO:0000318"/>
    <property type="project" value="GO_Central"/>
</dbReference>
<dbReference type="GO" id="GO:0030659">
    <property type="term" value="C:cytoplasmic vesicle membrane"/>
    <property type="evidence" value="ECO:0007669"/>
    <property type="project" value="UniProtKB-SubCell"/>
</dbReference>
<dbReference type="GO" id="GO:0098978">
    <property type="term" value="C:glutamatergic synapse"/>
    <property type="evidence" value="ECO:0000266"/>
    <property type="project" value="RGD"/>
</dbReference>
<dbReference type="GO" id="GO:0005886">
    <property type="term" value="C:plasma membrane"/>
    <property type="evidence" value="ECO:0007669"/>
    <property type="project" value="UniProtKB-SubCell"/>
</dbReference>
<dbReference type="GO" id="GO:0098794">
    <property type="term" value="C:postsynapse"/>
    <property type="evidence" value="ECO:0000314"/>
    <property type="project" value="SynGO"/>
</dbReference>
<dbReference type="GO" id="GO:0045202">
    <property type="term" value="C:synapse"/>
    <property type="evidence" value="ECO:0000318"/>
    <property type="project" value="GO_Central"/>
</dbReference>
<dbReference type="GO" id="GO:0005524">
    <property type="term" value="F:ATP binding"/>
    <property type="evidence" value="ECO:0007669"/>
    <property type="project" value="InterPro"/>
</dbReference>
<dbReference type="GO" id="GO:0004683">
    <property type="term" value="F:calcium/calmodulin-dependent protein kinase activity"/>
    <property type="evidence" value="ECO:0000318"/>
    <property type="project" value="GO_Central"/>
</dbReference>
<dbReference type="GO" id="GO:0005516">
    <property type="term" value="F:calmodulin binding"/>
    <property type="evidence" value="ECO:0000314"/>
    <property type="project" value="RGD"/>
</dbReference>
<dbReference type="GO" id="GO:0050804">
    <property type="term" value="P:modulation of chemical synaptic transmission"/>
    <property type="evidence" value="ECO:0000266"/>
    <property type="project" value="RGD"/>
</dbReference>
<dbReference type="GO" id="GO:0099159">
    <property type="term" value="P:regulation of modification of postsynaptic structure"/>
    <property type="evidence" value="ECO:0000266"/>
    <property type="project" value="RGD"/>
</dbReference>
<dbReference type="GO" id="GO:0007165">
    <property type="term" value="P:signal transduction"/>
    <property type="evidence" value="ECO:0000318"/>
    <property type="project" value="GO_Central"/>
</dbReference>
<dbReference type="CDD" id="cd14088">
    <property type="entry name" value="STKc_CaMK_like"/>
    <property type="match status" value="1"/>
</dbReference>
<dbReference type="FunFam" id="1.10.510.10:FF:000188">
    <property type="entry name" value="CaM kinase-like vesicle-associated, like"/>
    <property type="match status" value="1"/>
</dbReference>
<dbReference type="FunFam" id="3.30.200.20:FF:000155">
    <property type="entry name" value="CaM kinase-like vesicle-associated, like"/>
    <property type="match status" value="1"/>
</dbReference>
<dbReference type="Gene3D" id="3.30.200.20">
    <property type="entry name" value="Phosphorylase Kinase, domain 1"/>
    <property type="match status" value="1"/>
</dbReference>
<dbReference type="Gene3D" id="1.10.510.10">
    <property type="entry name" value="Transferase(Phosphotransferase) domain 1"/>
    <property type="match status" value="1"/>
</dbReference>
<dbReference type="InterPro" id="IPR011009">
    <property type="entry name" value="Kinase-like_dom_sf"/>
</dbReference>
<dbReference type="InterPro" id="IPR000719">
    <property type="entry name" value="Prot_kinase_dom"/>
</dbReference>
<dbReference type="PANTHER" id="PTHR24347">
    <property type="entry name" value="SERINE/THREONINE-PROTEIN KINASE"/>
    <property type="match status" value="1"/>
</dbReference>
<dbReference type="Pfam" id="PF00069">
    <property type="entry name" value="Pkinase"/>
    <property type="match status" value="1"/>
</dbReference>
<dbReference type="SUPFAM" id="SSF56112">
    <property type="entry name" value="Protein kinase-like (PK-like)"/>
    <property type="match status" value="1"/>
</dbReference>
<dbReference type="PROSITE" id="PS50011">
    <property type="entry name" value="PROTEIN_KINASE_DOM"/>
    <property type="match status" value="1"/>
</dbReference>
<evidence type="ECO:0000250" key="1">
    <source>
        <dbReference type="UniProtKB" id="Q3UHL1"/>
    </source>
</evidence>
<evidence type="ECO:0000255" key="2">
    <source>
        <dbReference type="PROSITE-ProRule" id="PRU00159"/>
    </source>
</evidence>
<evidence type="ECO:0000256" key="3">
    <source>
        <dbReference type="SAM" id="MobiDB-lite"/>
    </source>
</evidence>
<evidence type="ECO:0000269" key="4">
    <source>
    </source>
</evidence>
<evidence type="ECO:0000305" key="5"/>
<evidence type="ECO:0007744" key="6">
    <source>
    </source>
</evidence>
<organism>
    <name type="scientific">Rattus norvegicus</name>
    <name type="common">Rat</name>
    <dbReference type="NCBI Taxonomy" id="10116"/>
    <lineage>
        <taxon>Eukaryota</taxon>
        <taxon>Metazoa</taxon>
        <taxon>Chordata</taxon>
        <taxon>Craniata</taxon>
        <taxon>Vertebrata</taxon>
        <taxon>Euteleostomi</taxon>
        <taxon>Mammalia</taxon>
        <taxon>Eutheria</taxon>
        <taxon>Euarchontoglires</taxon>
        <taxon>Glires</taxon>
        <taxon>Rodentia</taxon>
        <taxon>Myomorpha</taxon>
        <taxon>Muroidea</taxon>
        <taxon>Muridae</taxon>
        <taxon>Murinae</taxon>
        <taxon>Rattus</taxon>
    </lineage>
</organism>
<gene>
    <name type="primary">Camkv</name>
    <name type="synonym">1G5</name>
</gene>
<comment type="function">
    <text>Has no detectable kinase activity in vitro.</text>
</comment>
<comment type="cofactor">
    <cofactor evidence="4">
        <name>Ca(2+)</name>
        <dbReference type="ChEBI" id="CHEBI:29108"/>
    </cofactor>
</comment>
<comment type="subunit">
    <text evidence="4">Interacts with calmodulin, in the presence of calcium.</text>
</comment>
<comment type="subcellular location">
    <subcellularLocation>
        <location evidence="4">Cell membrane</location>
        <topology evidence="4">Peripheral membrane protein</topology>
    </subcellularLocation>
    <subcellularLocation>
        <location evidence="4">Cytoplasmic vesicle membrane</location>
        <topology evidence="4">Peripheral membrane protein</topology>
    </subcellularLocation>
    <text>Predominantly observed in association with the plasma membrane of soma and in neurites, both axons and dendrites. May be associated with vesicular structures.</text>
</comment>
<comment type="tissue specificity">
    <text evidence="4">Expressed in brain and weakly in eye. Not detected in liver, kidney, spleen, thymus, bladder, aorta, lung, intestine, esophagus, stomach, skeletal muscle, heart, diaphragm, uterus, tail skin, submaxillary gland, prostate, ear, epididymis, placenta, pancreas, ovary, testis, adrenal gland, parathyroid gland, thyroid gland, pineal gland, pituitary and sciatic nerve. In adult hippocampus, predominantly expressed in caudate nucleus, cortex, hypothalamus, olfactory bulb, and midbrain and faintly in pons, brainstem and spinal cord.</text>
</comment>
<comment type="developmental stage">
    <text evidence="4">Expressed from day 16 dpc, but accumulation was primarily postnatal with maximal steady state levels reached at postnatal day 10.</text>
</comment>
<comment type="domain">
    <text>The protein kinase domain is predicted to be catalytically inactive.</text>
</comment>
<comment type="similarity">
    <text evidence="5">Belongs to the protein kinase superfamily. CAMK Ser/Thr protein kinase family.</text>
</comment>
<proteinExistence type="evidence at protein level"/>
<reference key="1">
    <citation type="journal article" date="1994" name="J. Neurosci.">
        <title>1G5: a calmodulin-binding, vesicle-associated, protein kinase-like protein enriched in forebrain neurites.</title>
        <authorList>
            <person name="Godbout M."/>
            <person name="Erlander M.G."/>
            <person name="Hasel K.W."/>
            <person name="Danielson P.E."/>
            <person name="Wong K.K."/>
            <person name="Battenberg E.L."/>
            <person name="Foye P.E."/>
            <person name="Bloom F.E."/>
            <person name="Sutcliffe J.G."/>
        </authorList>
    </citation>
    <scope>NUCLEOTIDE SEQUENCE [MRNA]</scope>
    <scope>TISSUE SPECIFICITY</scope>
    <scope>DEVELOPMENTAL STAGE</scope>
    <scope>COFACTOR</scope>
    <scope>INTERACTION WITH CALMODULIN</scope>
    <scope>SUBCELLULAR LOCATION</scope>
    <source>
        <tissue>Hypothalamus</tissue>
    </source>
</reference>
<reference key="2">
    <citation type="journal article" date="2012" name="Nat. Commun.">
        <title>Quantitative maps of protein phosphorylation sites across 14 different rat organs and tissues.</title>
        <authorList>
            <person name="Lundby A."/>
            <person name="Secher A."/>
            <person name="Lage K."/>
            <person name="Nordsborg N.B."/>
            <person name="Dmytriyev A."/>
            <person name="Lundby C."/>
            <person name="Olsen J.V."/>
        </authorList>
    </citation>
    <scope>PHOSPHORYLATION [LARGE SCALE ANALYSIS] AT THR-438</scope>
    <scope>IDENTIFICATION BY MASS SPECTROMETRY [LARGE SCALE ANALYSIS]</scope>
</reference>
<accession>Q63092</accession>
<keyword id="KW-0112">Calmodulin-binding</keyword>
<keyword id="KW-1003">Cell membrane</keyword>
<keyword id="KW-0968">Cytoplasmic vesicle</keyword>
<keyword id="KW-0472">Membrane</keyword>
<keyword id="KW-0597">Phosphoprotein</keyword>
<keyword id="KW-1185">Reference proteome</keyword>
<name>CAMKV_RAT</name>
<sequence length="504" mass="54106">MPFGCVTLGDKKNYNQPSEVTDRYDLGQVVKTEEFCEIFRAKDKTTGKLHTCKKFQKRDGRKVRKAAKNEIGILKMVKHPNILQLVDVFVTRKEYFIFLELATGREVFDWILDQGYYSERDTSNVVRQVLEAVAYLHSLKIVHRNLKLENLVYYNRLKNSKIVISDFHLAKLENGLIKEPCGTPEYLAPEVVGRQRYGRPVDCWAIGVIMYILLSGNPPFYEEVEEDDYENHDKNLFRKILAGDYEFDSPYWDDISQAAKDLVTRLMEVEQDQRITAEEAISHEWISGNAASDKNIKDGVCAQIEKNFARAKWKKAVRVTTLMKRLRAPEQSGTAATSDAATPGAAGGAVAAAAGGAAPASGASATVGTGGDAGCAAKSDDMASADRSATPATDGSATPATDGSVTPATDGSITPATDGSVTPATDRSATPATDGRATPATEESTVPAAQSSAAPAAKAAATPEPAVAQPDSTALEGATGQAPPSSKGEEATGCAQESQRVETS</sequence>
<protein>
    <recommendedName>
        <fullName>CaM kinase-like vesicle-associated protein</fullName>
    </recommendedName>
    <alternativeName>
        <fullName>1G5</fullName>
    </alternativeName>
</protein>
<feature type="chain" id="PRO_0000250096" description="CaM kinase-like vesicle-associated protein">
    <location>
        <begin position="1"/>
        <end position="504"/>
    </location>
</feature>
<feature type="domain" description="Protein kinase" evidence="2">
    <location>
        <begin position="24"/>
        <end position="286"/>
    </location>
</feature>
<feature type="region of interest" description="Disordered" evidence="3">
    <location>
        <begin position="378"/>
        <end position="504"/>
    </location>
</feature>
<feature type="compositionally biased region" description="Polar residues" evidence="3">
    <location>
        <begin position="390"/>
        <end position="431"/>
    </location>
</feature>
<feature type="compositionally biased region" description="Low complexity" evidence="3">
    <location>
        <begin position="445"/>
        <end position="470"/>
    </location>
</feature>
<feature type="modified residue" description="Phosphoserine" evidence="1">
    <location>
        <position position="384"/>
    </location>
</feature>
<feature type="modified residue" description="Phosphothreonine" evidence="6">
    <location>
        <position position="438"/>
    </location>
</feature>
<feature type="modified residue" description="Phosphothreonine" evidence="1">
    <location>
        <position position="462"/>
    </location>
</feature>